<comment type="function">
    <text evidence="1">Has a dual specificity toward Ser/Thr and Tyr-containing proteins.</text>
</comment>
<comment type="catalytic activity">
    <reaction evidence="3">
        <text>O-phospho-L-tyrosyl-[protein] + H2O = L-tyrosyl-[protein] + phosphate</text>
        <dbReference type="Rhea" id="RHEA:10684"/>
        <dbReference type="Rhea" id="RHEA-COMP:10136"/>
        <dbReference type="Rhea" id="RHEA-COMP:20101"/>
        <dbReference type="ChEBI" id="CHEBI:15377"/>
        <dbReference type="ChEBI" id="CHEBI:43474"/>
        <dbReference type="ChEBI" id="CHEBI:46858"/>
        <dbReference type="ChEBI" id="CHEBI:61978"/>
        <dbReference type="EC" id="3.1.3.48"/>
    </reaction>
</comment>
<comment type="catalytic activity">
    <reaction>
        <text>O-phospho-L-seryl-[protein] + H2O = L-seryl-[protein] + phosphate</text>
        <dbReference type="Rhea" id="RHEA:20629"/>
        <dbReference type="Rhea" id="RHEA-COMP:9863"/>
        <dbReference type="Rhea" id="RHEA-COMP:11604"/>
        <dbReference type="ChEBI" id="CHEBI:15377"/>
        <dbReference type="ChEBI" id="CHEBI:29999"/>
        <dbReference type="ChEBI" id="CHEBI:43474"/>
        <dbReference type="ChEBI" id="CHEBI:83421"/>
        <dbReference type="EC" id="3.1.3.16"/>
    </reaction>
</comment>
<comment type="catalytic activity">
    <reaction>
        <text>O-phospho-L-threonyl-[protein] + H2O = L-threonyl-[protein] + phosphate</text>
        <dbReference type="Rhea" id="RHEA:47004"/>
        <dbReference type="Rhea" id="RHEA-COMP:11060"/>
        <dbReference type="Rhea" id="RHEA-COMP:11605"/>
        <dbReference type="ChEBI" id="CHEBI:15377"/>
        <dbReference type="ChEBI" id="CHEBI:30013"/>
        <dbReference type="ChEBI" id="CHEBI:43474"/>
        <dbReference type="ChEBI" id="CHEBI:61977"/>
        <dbReference type="EC" id="3.1.3.16"/>
    </reaction>
</comment>
<comment type="similarity">
    <text evidence="5">Belongs to the protein-tyrosine phosphatase family. Non-receptor class dual specificity subfamily.</text>
</comment>
<accession>Q54T76</accession>
<dbReference type="EC" id="3.1.3.16"/>
<dbReference type="EC" id="3.1.3.48"/>
<dbReference type="EMBL" id="AAFI02000044">
    <property type="protein sequence ID" value="EAL66403.1"/>
    <property type="molecule type" value="Genomic_DNA"/>
</dbReference>
<dbReference type="RefSeq" id="XP_640375.1">
    <property type="nucleotide sequence ID" value="XM_635283.1"/>
</dbReference>
<dbReference type="SMR" id="Q54T76"/>
<dbReference type="FunCoup" id="Q54T76">
    <property type="interactions" value="672"/>
</dbReference>
<dbReference type="STRING" id="44689.Q54T76"/>
<dbReference type="PaxDb" id="44689-DDB0238872"/>
<dbReference type="EnsemblProtists" id="EAL66403">
    <property type="protein sequence ID" value="EAL66403"/>
    <property type="gene ID" value="DDB_G0281963"/>
</dbReference>
<dbReference type="GeneID" id="8623328"/>
<dbReference type="KEGG" id="ddi:DDB_G0281963"/>
<dbReference type="dictyBase" id="DDB_G0281963"/>
<dbReference type="VEuPathDB" id="AmoebaDB:DDB_G0281963"/>
<dbReference type="eggNOG" id="KOG1716">
    <property type="taxonomic scope" value="Eukaryota"/>
</dbReference>
<dbReference type="HOGENOM" id="CLU_023312_1_0_1"/>
<dbReference type="InParanoid" id="Q54T76"/>
<dbReference type="OMA" id="LYWNNFA"/>
<dbReference type="PhylomeDB" id="Q54T76"/>
<dbReference type="PRO" id="PR:Q54T76"/>
<dbReference type="Proteomes" id="UP000002195">
    <property type="component" value="Chromosome 3"/>
</dbReference>
<dbReference type="GO" id="GO:0005634">
    <property type="term" value="C:nucleus"/>
    <property type="evidence" value="ECO:0000318"/>
    <property type="project" value="GO_Central"/>
</dbReference>
<dbReference type="GO" id="GO:0004722">
    <property type="term" value="F:protein serine/threonine phosphatase activity"/>
    <property type="evidence" value="ECO:0007669"/>
    <property type="project" value="UniProtKB-EC"/>
</dbReference>
<dbReference type="GO" id="GO:0004725">
    <property type="term" value="F:protein tyrosine phosphatase activity"/>
    <property type="evidence" value="ECO:0007669"/>
    <property type="project" value="UniProtKB-EC"/>
</dbReference>
<dbReference type="GO" id="GO:0008138">
    <property type="term" value="F:protein tyrosine/serine/threonine phosphatase activity"/>
    <property type="evidence" value="ECO:0000318"/>
    <property type="project" value="GO_Central"/>
</dbReference>
<dbReference type="CDD" id="cd14498">
    <property type="entry name" value="DSP"/>
    <property type="match status" value="1"/>
</dbReference>
<dbReference type="FunFam" id="3.90.190.10:FF:000161">
    <property type="entry name" value="Probable dual specificity protein phosphatase DDB_G0269404"/>
    <property type="match status" value="1"/>
</dbReference>
<dbReference type="Gene3D" id="3.90.190.10">
    <property type="entry name" value="Protein tyrosine phosphatase superfamily"/>
    <property type="match status" value="1"/>
</dbReference>
<dbReference type="InterPro" id="IPR000340">
    <property type="entry name" value="Dual-sp_phosphatase_cat-dom"/>
</dbReference>
<dbReference type="InterPro" id="IPR016278">
    <property type="entry name" value="DUSP12"/>
</dbReference>
<dbReference type="InterPro" id="IPR029021">
    <property type="entry name" value="Prot-tyrosine_phosphatase-like"/>
</dbReference>
<dbReference type="InterPro" id="IPR016130">
    <property type="entry name" value="Tyr_Pase_AS"/>
</dbReference>
<dbReference type="InterPro" id="IPR000387">
    <property type="entry name" value="Tyr_Pase_dom"/>
</dbReference>
<dbReference type="InterPro" id="IPR020422">
    <property type="entry name" value="TYR_PHOSPHATASE_DUAL_dom"/>
</dbReference>
<dbReference type="PANTHER" id="PTHR45848:SF4">
    <property type="entry name" value="DUAL SPECIFICITY PROTEIN PHOSPHATASE 12"/>
    <property type="match status" value="1"/>
</dbReference>
<dbReference type="PANTHER" id="PTHR45848">
    <property type="entry name" value="DUAL SPECIFICITY PROTEIN PHOSPHATASE 12 FAMILY MEMBER"/>
    <property type="match status" value="1"/>
</dbReference>
<dbReference type="Pfam" id="PF00782">
    <property type="entry name" value="DSPc"/>
    <property type="match status" value="1"/>
</dbReference>
<dbReference type="PIRSF" id="PIRSF000941">
    <property type="entry name" value="DUSP12"/>
    <property type="match status" value="1"/>
</dbReference>
<dbReference type="SMART" id="SM00195">
    <property type="entry name" value="DSPc"/>
    <property type="match status" value="1"/>
</dbReference>
<dbReference type="SUPFAM" id="SSF52799">
    <property type="entry name" value="(Phosphotyrosine protein) phosphatases II"/>
    <property type="match status" value="1"/>
</dbReference>
<dbReference type="PROSITE" id="PS00383">
    <property type="entry name" value="TYR_PHOSPHATASE_1"/>
    <property type="match status" value="1"/>
</dbReference>
<dbReference type="PROSITE" id="PS50056">
    <property type="entry name" value="TYR_PHOSPHATASE_2"/>
    <property type="match status" value="1"/>
</dbReference>
<dbReference type="PROSITE" id="PS50054">
    <property type="entry name" value="TYR_PHOSPHATASE_DUAL"/>
    <property type="match status" value="1"/>
</dbReference>
<organism>
    <name type="scientific">Dictyostelium discoideum</name>
    <name type="common">Social amoeba</name>
    <dbReference type="NCBI Taxonomy" id="44689"/>
    <lineage>
        <taxon>Eukaryota</taxon>
        <taxon>Amoebozoa</taxon>
        <taxon>Evosea</taxon>
        <taxon>Eumycetozoa</taxon>
        <taxon>Dictyostelia</taxon>
        <taxon>Dictyosteliales</taxon>
        <taxon>Dictyosteliaceae</taxon>
        <taxon>Dictyostelium</taxon>
    </lineage>
</organism>
<name>DUSP4_DICDI</name>
<sequence>MNDVSRIFPGFYIGSLPAVNRNTLDKYQITHVCSVLNEFQPKWTKIYKYLHIDIYDSPSVDIMKYFDKTFQFIEEGRKDGGVLVHCFAGISRSATICIAYIMRKLNISFEDAHGLVSDARPIIYPNESFIKQLKKYELILKKNRENPQIVEKESEEEDDDEDDDDDDYDSDEDDDDDSEDDDFEEEFDNVVKKKNNNNKKVNVKNTTKVFSNISISSEQTTTSTTTVPTPTLNPETKIEETTTTTTATATATLVEEVVESTSPKATLGEHRYSCRKCSKDLFLDFDILDHEQGQGQTSFKWNKRDNTTCNKSVGANGEQIEDQNKVICTSYFISEIEFSLSQTYSGMEGKLFCPSCNEKLGSWSWSGEQCSCGAWIAPSFQIPKTRVDEKKVLK</sequence>
<evidence type="ECO:0000250" key="1"/>
<evidence type="ECO:0000255" key="2">
    <source>
        <dbReference type="PROSITE-ProRule" id="PRU00160"/>
    </source>
</evidence>
<evidence type="ECO:0000255" key="3">
    <source>
        <dbReference type="PROSITE-ProRule" id="PRU10044"/>
    </source>
</evidence>
<evidence type="ECO:0000256" key="4">
    <source>
        <dbReference type="SAM" id="MobiDB-lite"/>
    </source>
</evidence>
<evidence type="ECO:0000305" key="5"/>
<protein>
    <recommendedName>
        <fullName>Probable dual specificity protein phosphatase DDB_G0281963</fullName>
        <ecNumber>3.1.3.16</ecNumber>
        <ecNumber>3.1.3.48</ecNumber>
    </recommendedName>
</protein>
<reference key="1">
    <citation type="journal article" date="2005" name="Nature">
        <title>The genome of the social amoeba Dictyostelium discoideum.</title>
        <authorList>
            <person name="Eichinger L."/>
            <person name="Pachebat J.A."/>
            <person name="Gloeckner G."/>
            <person name="Rajandream M.A."/>
            <person name="Sucgang R."/>
            <person name="Berriman M."/>
            <person name="Song J."/>
            <person name="Olsen R."/>
            <person name="Szafranski K."/>
            <person name="Xu Q."/>
            <person name="Tunggal B."/>
            <person name="Kummerfeld S."/>
            <person name="Madera M."/>
            <person name="Konfortov B.A."/>
            <person name="Rivero F."/>
            <person name="Bankier A.T."/>
            <person name="Lehmann R."/>
            <person name="Hamlin N."/>
            <person name="Davies R."/>
            <person name="Gaudet P."/>
            <person name="Fey P."/>
            <person name="Pilcher K."/>
            <person name="Chen G."/>
            <person name="Saunders D."/>
            <person name="Sodergren E.J."/>
            <person name="Davis P."/>
            <person name="Kerhornou A."/>
            <person name="Nie X."/>
            <person name="Hall N."/>
            <person name="Anjard C."/>
            <person name="Hemphill L."/>
            <person name="Bason N."/>
            <person name="Farbrother P."/>
            <person name="Desany B."/>
            <person name="Just E."/>
            <person name="Morio T."/>
            <person name="Rost R."/>
            <person name="Churcher C.M."/>
            <person name="Cooper J."/>
            <person name="Haydock S."/>
            <person name="van Driessche N."/>
            <person name="Cronin A."/>
            <person name="Goodhead I."/>
            <person name="Muzny D.M."/>
            <person name="Mourier T."/>
            <person name="Pain A."/>
            <person name="Lu M."/>
            <person name="Harper D."/>
            <person name="Lindsay R."/>
            <person name="Hauser H."/>
            <person name="James K.D."/>
            <person name="Quiles M."/>
            <person name="Madan Babu M."/>
            <person name="Saito T."/>
            <person name="Buchrieser C."/>
            <person name="Wardroper A."/>
            <person name="Felder M."/>
            <person name="Thangavelu M."/>
            <person name="Johnson D."/>
            <person name="Knights A."/>
            <person name="Loulseged H."/>
            <person name="Mungall K.L."/>
            <person name="Oliver K."/>
            <person name="Price C."/>
            <person name="Quail M.A."/>
            <person name="Urushihara H."/>
            <person name="Hernandez J."/>
            <person name="Rabbinowitsch E."/>
            <person name="Steffen D."/>
            <person name="Sanders M."/>
            <person name="Ma J."/>
            <person name="Kohara Y."/>
            <person name="Sharp S."/>
            <person name="Simmonds M.N."/>
            <person name="Spiegler S."/>
            <person name="Tivey A."/>
            <person name="Sugano S."/>
            <person name="White B."/>
            <person name="Walker D."/>
            <person name="Woodward J.R."/>
            <person name="Winckler T."/>
            <person name="Tanaka Y."/>
            <person name="Shaulsky G."/>
            <person name="Schleicher M."/>
            <person name="Weinstock G.M."/>
            <person name="Rosenthal A."/>
            <person name="Cox E.C."/>
            <person name="Chisholm R.L."/>
            <person name="Gibbs R.A."/>
            <person name="Loomis W.F."/>
            <person name="Platzer M."/>
            <person name="Kay R.R."/>
            <person name="Williams J.G."/>
            <person name="Dear P.H."/>
            <person name="Noegel A.A."/>
            <person name="Barrell B.G."/>
            <person name="Kuspa A."/>
        </authorList>
    </citation>
    <scope>NUCLEOTIDE SEQUENCE [LARGE SCALE GENOMIC DNA]</scope>
    <source>
        <strain>AX4</strain>
    </source>
</reference>
<gene>
    <name type="ORF">DDB_G0281963</name>
</gene>
<feature type="chain" id="PRO_0000332953" description="Probable dual specificity protein phosphatase DDB_G0281963">
    <location>
        <begin position="1"/>
        <end position="394"/>
    </location>
</feature>
<feature type="domain" description="Tyrosine-protein phosphatase" evidence="2">
    <location>
        <begin position="2"/>
        <end position="142"/>
    </location>
</feature>
<feature type="region of interest" description="Disordered" evidence="4">
    <location>
        <begin position="147"/>
        <end position="191"/>
    </location>
</feature>
<feature type="compositionally biased region" description="Acidic residues" evidence="4">
    <location>
        <begin position="153"/>
        <end position="188"/>
    </location>
</feature>
<feature type="active site" description="Phosphocysteine intermediate" evidence="2">
    <location>
        <position position="86"/>
    </location>
</feature>
<keyword id="KW-0378">Hydrolase</keyword>
<keyword id="KW-0904">Protein phosphatase</keyword>
<keyword id="KW-1185">Reference proteome</keyword>
<proteinExistence type="inferred from homology"/>